<comment type="function">
    <text>Growth hormone plays an important role in growth control and is involved in the regulation of several anabolic processes. Implicated as an osmoregulatory substance important for seawater adaptation.</text>
</comment>
<comment type="subcellular location">
    <subcellularLocation>
        <location>Secreted</location>
    </subcellularLocation>
</comment>
<comment type="similarity">
    <text evidence="2">Belongs to the somatotropin/prolactin family.</text>
</comment>
<name>SOMA_PROAN</name>
<gene>
    <name type="primary">gh</name>
</gene>
<sequence>MAGLHFFPALLALLMASLQTHQGFPMPSLSSLLSNAVQRANYLHNLAGDRYRDFEQNYISDEQRHSIKNSPAAYCYSESSPAPTGKEDARQKSDMDLLRFSLSLIQAWISPLQILGRPFGSPDAYDKLLDLEKGLQVLMRELEDGSSRGLSLLKHTYDKFSANQFSEEATLKNYSLLACFKKDMHKVETYLRVMKCRRFPESNCTI</sequence>
<reference key="1">
    <citation type="journal article" date="1999" name="Gen. Comp. Endocrinol.">
        <title>Studies on the GH/SL gene family: cloning of African lungfish (Protopterus annectens) growth hormone and somatolactin and toad (Bufo marinus) growth hormone.</title>
        <authorList>
            <person name="May D."/>
            <person name="Alrubaian J."/>
            <person name="Patel S."/>
            <person name="Dores R.M."/>
            <person name="Rand-Weaver M."/>
        </authorList>
    </citation>
    <scope>NUCLEOTIDE SEQUENCE [MRNA]</scope>
    <source>
        <tissue>Pituitary</tissue>
    </source>
</reference>
<dbReference type="EMBL" id="AF062745">
    <property type="protein sequence ID" value="AAC16496.1"/>
    <property type="molecule type" value="mRNA"/>
</dbReference>
<dbReference type="SMR" id="O73848"/>
<dbReference type="GO" id="GO:0005615">
    <property type="term" value="C:extracellular space"/>
    <property type="evidence" value="ECO:0007669"/>
    <property type="project" value="InterPro"/>
</dbReference>
<dbReference type="GO" id="GO:0008083">
    <property type="term" value="F:growth factor activity"/>
    <property type="evidence" value="ECO:0007669"/>
    <property type="project" value="TreeGrafter"/>
</dbReference>
<dbReference type="GO" id="GO:0005131">
    <property type="term" value="F:growth hormone receptor binding"/>
    <property type="evidence" value="ECO:0007669"/>
    <property type="project" value="InterPro"/>
</dbReference>
<dbReference type="GO" id="GO:0005179">
    <property type="term" value="F:hormone activity"/>
    <property type="evidence" value="ECO:0007669"/>
    <property type="project" value="UniProtKB-KW"/>
</dbReference>
<dbReference type="GO" id="GO:0048513">
    <property type="term" value="P:animal organ development"/>
    <property type="evidence" value="ECO:0007669"/>
    <property type="project" value="TreeGrafter"/>
</dbReference>
<dbReference type="GO" id="GO:0060396">
    <property type="term" value="P:growth hormone receptor signaling pathway"/>
    <property type="evidence" value="ECO:0007669"/>
    <property type="project" value="TreeGrafter"/>
</dbReference>
<dbReference type="GO" id="GO:0045927">
    <property type="term" value="P:positive regulation of growth"/>
    <property type="evidence" value="ECO:0007669"/>
    <property type="project" value="TreeGrafter"/>
</dbReference>
<dbReference type="GO" id="GO:0046427">
    <property type="term" value="P:positive regulation of receptor signaling pathway via JAK-STAT"/>
    <property type="evidence" value="ECO:0007669"/>
    <property type="project" value="TreeGrafter"/>
</dbReference>
<dbReference type="GO" id="GO:0031667">
    <property type="term" value="P:response to nutrient levels"/>
    <property type="evidence" value="ECO:0007669"/>
    <property type="project" value="TreeGrafter"/>
</dbReference>
<dbReference type="CDD" id="cd10285">
    <property type="entry name" value="somatotropin_like"/>
    <property type="match status" value="1"/>
</dbReference>
<dbReference type="Gene3D" id="1.20.1250.10">
    <property type="match status" value="1"/>
</dbReference>
<dbReference type="InterPro" id="IPR009079">
    <property type="entry name" value="4_helix_cytokine-like_core"/>
</dbReference>
<dbReference type="InterPro" id="IPR034975">
    <property type="entry name" value="Somatotropin"/>
</dbReference>
<dbReference type="InterPro" id="IPR001400">
    <property type="entry name" value="Somatotropin/Prolactin"/>
</dbReference>
<dbReference type="InterPro" id="IPR018116">
    <property type="entry name" value="Somatotropin_CS"/>
</dbReference>
<dbReference type="PANTHER" id="PTHR11417:SF2">
    <property type="entry name" value="SOMATOTROPIN"/>
    <property type="match status" value="1"/>
</dbReference>
<dbReference type="PANTHER" id="PTHR11417">
    <property type="entry name" value="SOMATOTROPIN,PROLACTIN"/>
    <property type="match status" value="1"/>
</dbReference>
<dbReference type="Pfam" id="PF00103">
    <property type="entry name" value="Hormone_1"/>
    <property type="match status" value="1"/>
</dbReference>
<dbReference type="PRINTS" id="PR00836">
    <property type="entry name" value="SOMATOTROPIN"/>
</dbReference>
<dbReference type="SUPFAM" id="SSF47266">
    <property type="entry name" value="4-helical cytokines"/>
    <property type="match status" value="1"/>
</dbReference>
<dbReference type="PROSITE" id="PS00266">
    <property type="entry name" value="SOMATOTROPIN_1"/>
    <property type="match status" value="1"/>
</dbReference>
<dbReference type="PROSITE" id="PS00338">
    <property type="entry name" value="SOMATOTROPIN_2"/>
    <property type="match status" value="1"/>
</dbReference>
<protein>
    <recommendedName>
        <fullName>Somatotropin</fullName>
    </recommendedName>
    <alternativeName>
        <fullName>Growth hormone</fullName>
    </alternativeName>
</protein>
<keyword id="KW-1015">Disulfide bond</keyword>
<keyword id="KW-0372">Hormone</keyword>
<keyword id="KW-0964">Secreted</keyword>
<keyword id="KW-0732">Signal</keyword>
<proteinExistence type="evidence at transcript level"/>
<organism>
    <name type="scientific">Protopterus annectens</name>
    <name type="common">African lungfish</name>
    <dbReference type="NCBI Taxonomy" id="7888"/>
    <lineage>
        <taxon>Eukaryota</taxon>
        <taxon>Metazoa</taxon>
        <taxon>Chordata</taxon>
        <taxon>Craniata</taxon>
        <taxon>Vertebrata</taxon>
        <taxon>Euteleostomi</taxon>
        <taxon>Dipnomorpha</taxon>
        <taxon>Ceratodontiformes</taxon>
        <taxon>Lepidosirenoidei</taxon>
        <taxon>Protopteridae</taxon>
        <taxon>Protopterus</taxon>
    </lineage>
</organism>
<feature type="signal peptide" evidence="1">
    <location>
        <begin position="1"/>
        <end position="22"/>
    </location>
</feature>
<feature type="chain" id="PRO_0000033049" description="Somatotropin">
    <location>
        <begin position="23"/>
        <end position="206"/>
    </location>
</feature>
<feature type="disulfide bond" evidence="1">
    <location>
        <begin position="75"/>
        <end position="179"/>
    </location>
</feature>
<feature type="disulfide bond" evidence="1">
    <location>
        <begin position="196"/>
        <end position="204"/>
    </location>
</feature>
<evidence type="ECO:0000250" key="1"/>
<evidence type="ECO:0000305" key="2"/>
<accession>O73848</accession>